<feature type="chain" id="PRO_0000106141" description="Gene 30 protein">
    <location>
        <begin position="1"/>
        <end position="225"/>
    </location>
</feature>
<feature type="region of interest" description="Disordered" evidence="1">
    <location>
        <begin position="48"/>
        <end position="73"/>
    </location>
</feature>
<feature type="compositionally biased region" description="Basic and acidic residues" evidence="1">
    <location>
        <begin position="51"/>
        <end position="73"/>
    </location>
</feature>
<organism>
    <name type="scientific">Bacillus phage SP01</name>
    <name type="common">Bacteriophage SP01</name>
    <dbReference type="NCBI Taxonomy" id="2884427"/>
    <lineage>
        <taxon>Viruses</taxon>
        <taxon>Duplodnaviria</taxon>
        <taxon>Heunggongvirae</taxon>
        <taxon>Uroviricota</taxon>
        <taxon>Caudoviricetes</taxon>
        <taxon>Herelleviridae</taxon>
        <taxon>Spounavirinae</taxon>
        <taxon>Okubovirus</taxon>
        <taxon>Okubovirus SPO1</taxon>
    </lineage>
</organism>
<dbReference type="EMBL" id="M82842">
    <property type="protein sequence ID" value="AAA32597.1"/>
    <property type="molecule type" value="Genomic_DNA"/>
</dbReference>
<dbReference type="PIR" id="S28679">
    <property type="entry name" value="S28679"/>
</dbReference>
<dbReference type="SMR" id="Q38423"/>
<dbReference type="CDD" id="cd04508">
    <property type="entry name" value="Tudor_SF"/>
    <property type="match status" value="1"/>
</dbReference>
<sequence>MSRIGQVCEAFRENHWEPATIISENGSLSVTVRYEDGETEELISNLVRNSELGHPEVKKEETTQQPEKGEGMAEPKIEGTCLDHFRWYNTITEKRPDNSKLFPVVSALMAVQYDKEGTYGSSWVGKGEHRGIMPNIDRKYDRLDTMTANEIEGKAKTLAQLESSFDSMNSNEKEALHESKIDAVADLANYCLLYMTFIKDNFPKMYNAWFEKNVPQYLRDKFPRL</sequence>
<protein>
    <recommendedName>
        <fullName>Gene 30 protein</fullName>
    </recommendedName>
    <alternativeName>
        <fullName>GP30</fullName>
    </alternativeName>
</protein>
<evidence type="ECO:0000256" key="1">
    <source>
        <dbReference type="SAM" id="MobiDB-lite"/>
    </source>
</evidence>
<name>GP30_BPSP1</name>
<gene>
    <name type="primary">30</name>
</gene>
<reference key="1">
    <citation type="journal article" date="1992" name="Gene">
        <title>Sequence of the bacteriophage SP01 gene 30.</title>
        <authorList>
            <person name="Scarlato V."/>
            <person name="Sayre M.H."/>
        </authorList>
    </citation>
    <scope>NUCLEOTIDE SEQUENCE [GENOMIC DNA]</scope>
</reference>
<comment type="function">
    <text>Essential for DNA synthesis.</text>
</comment>
<accession>Q38423</accession>
<organismHost>
    <name type="scientific">Bacillus subtilis</name>
    <dbReference type="NCBI Taxonomy" id="1423"/>
</organismHost>
<proteinExistence type="predicted"/>